<sequence>MELPKETIEQLQNLFIAANRPEKEIREEATSKIQKFVKETPNSIITLLVFQNLKTIDAGARTLSAITFKNLVKDSWVDGDEVENPIPSNDKEMVKSLLLNFILSAVNNTTQSQLVESLSMIGVSDFPQQWPSILPELIKQMESNTDIPTLSIILRVLHSLLKKYRGQERNNQSLSELKYILSILPTPYLSLLIKTGVAVDANLQNEQQLVLLLNCVHFLLEIFFSMSSVDLPEFFEDNLASFTNEFHRYLKFNTNFQSIILSSNDEEPSLLKKIQTSICEIINLYTQIYDEEFSSFLQPFVQVVWGLLTQTSKDICNDPFVYASIRFLGTVATSISHKIFESPETLKQICSMIVTPNIELRESDIELYEDNHVEYMRRDIEGSDSDTRRRAAIELVKGLRKYYENQVIQLLSVDINNLLQKYNSNREENWICKDSAIFLVTALAVKSGGSDESSESSKLVNVLDFFKSSIEPELSGATQTNKPILKADCLKFITIFRNQIPAEEYPRILQSVIPCLENPDFIIHTYASTCIDRLLSVKDGGVPRLSAEFISTNLTGLLLPLVGVFNFKDSKQNERAMRTIVRIVLMTQGKVSQQITIQLLQKFVSIIIEEAKNPSNHSFNHYCFEVVGTLLKGFSSEPEVTQIIMPLIEMVLQTNNAEFSPYCFQLLSILVENCRPEYLDLFRPILPIIFNDMTWARDADYPALVRLLQAFIKKEGSSIAPHLSAILGITEKLIMRVTHDHEAFLILETVVETLDIQFLEKYLGGIFSMILTRITKKKTLKVVRCFTIFFSIFMIKYGVVKTAQTVRAIKDSLWEDILIKLWLPTVEDINGSIEKKIISISLTNMICCNDILATPELWIKLIQCQSNVISGKKSQETEQAGAASDLYIDQAEANEGYVPTFTQLQFSKKVDVDPFPTISNPKEYFISTFQTFKSQNEMLVTPLLSTANIQL</sequence>
<gene>
    <name type="primary">xpo2</name>
    <name type="ORF">DDB_G0291838</name>
</gene>
<accession>Q54E36</accession>
<proteinExistence type="inferred from homology"/>
<organism>
    <name type="scientific">Dictyostelium discoideum</name>
    <name type="common">Social amoeba</name>
    <dbReference type="NCBI Taxonomy" id="44689"/>
    <lineage>
        <taxon>Eukaryota</taxon>
        <taxon>Amoebozoa</taxon>
        <taxon>Evosea</taxon>
        <taxon>Eumycetozoa</taxon>
        <taxon>Dictyostelia</taxon>
        <taxon>Dictyosteliales</taxon>
        <taxon>Dictyosteliaceae</taxon>
        <taxon>Dictyostelium</taxon>
    </lineage>
</organism>
<feature type="chain" id="PRO_0000342153" description="Exportin-2">
    <location>
        <begin position="1"/>
        <end position="951"/>
    </location>
</feature>
<feature type="domain" description="Importin N-terminal" evidence="2">
    <location>
        <begin position="29"/>
        <end position="104"/>
    </location>
</feature>
<protein>
    <recommendedName>
        <fullName>Exportin-2</fullName>
        <shortName>Exp2</shortName>
    </recommendedName>
    <alternativeName>
        <fullName>Importin-alpha re-exporter</fullName>
    </alternativeName>
</protein>
<keyword id="KW-0963">Cytoplasm</keyword>
<keyword id="KW-0539">Nucleus</keyword>
<keyword id="KW-0653">Protein transport</keyword>
<keyword id="KW-1185">Reference proteome</keyword>
<keyword id="KW-0813">Transport</keyword>
<dbReference type="EMBL" id="AAFI02000185">
    <property type="protein sequence ID" value="EAL61540.1"/>
    <property type="molecule type" value="Genomic_DNA"/>
</dbReference>
<dbReference type="RefSeq" id="XP_629951.1">
    <property type="nucleotide sequence ID" value="XM_629949.1"/>
</dbReference>
<dbReference type="SMR" id="Q54E36"/>
<dbReference type="FunCoup" id="Q54E36">
    <property type="interactions" value="1217"/>
</dbReference>
<dbReference type="STRING" id="44689.Q54E36"/>
<dbReference type="PaxDb" id="44689-DDB0191603"/>
<dbReference type="EnsemblProtists" id="EAL61540">
    <property type="protein sequence ID" value="EAL61540"/>
    <property type="gene ID" value="DDB_G0291838"/>
</dbReference>
<dbReference type="GeneID" id="8628357"/>
<dbReference type="KEGG" id="ddi:DDB_G0291838"/>
<dbReference type="dictyBase" id="DDB_G0291838">
    <property type="gene designation" value="xpo2"/>
</dbReference>
<dbReference type="VEuPathDB" id="AmoebaDB:DDB_G0291838"/>
<dbReference type="eggNOG" id="KOG1992">
    <property type="taxonomic scope" value="Eukaryota"/>
</dbReference>
<dbReference type="HOGENOM" id="CLU_009614_0_0_1"/>
<dbReference type="InParanoid" id="Q54E36"/>
<dbReference type="OMA" id="AENEFLM"/>
<dbReference type="PhylomeDB" id="Q54E36"/>
<dbReference type="PRO" id="PR:Q54E36"/>
<dbReference type="Proteomes" id="UP000002195">
    <property type="component" value="Chromosome 6"/>
</dbReference>
<dbReference type="GO" id="GO:0005829">
    <property type="term" value="C:cytosol"/>
    <property type="evidence" value="ECO:0000318"/>
    <property type="project" value="GO_Central"/>
</dbReference>
<dbReference type="GO" id="GO:0005635">
    <property type="term" value="C:nuclear envelope"/>
    <property type="evidence" value="ECO:0000318"/>
    <property type="project" value="GO_Central"/>
</dbReference>
<dbReference type="GO" id="GO:0005049">
    <property type="term" value="F:nuclear export signal receptor activity"/>
    <property type="evidence" value="ECO:0000318"/>
    <property type="project" value="GO_Central"/>
</dbReference>
<dbReference type="GO" id="GO:0031267">
    <property type="term" value="F:small GTPase binding"/>
    <property type="evidence" value="ECO:0007669"/>
    <property type="project" value="InterPro"/>
</dbReference>
<dbReference type="GO" id="GO:0006611">
    <property type="term" value="P:protein export from nucleus"/>
    <property type="evidence" value="ECO:0000318"/>
    <property type="project" value="GO_Central"/>
</dbReference>
<dbReference type="GO" id="GO:0006606">
    <property type="term" value="P:protein import into nucleus"/>
    <property type="evidence" value="ECO:0000318"/>
    <property type="project" value="GO_Central"/>
</dbReference>
<dbReference type="FunFam" id="1.25.10.10:FF:000507">
    <property type="entry name" value="Exportin-2"/>
    <property type="match status" value="1"/>
</dbReference>
<dbReference type="Gene3D" id="1.25.10.10">
    <property type="entry name" value="Leucine-rich Repeat Variant"/>
    <property type="match status" value="1"/>
</dbReference>
<dbReference type="InterPro" id="IPR011989">
    <property type="entry name" value="ARM-like"/>
</dbReference>
<dbReference type="InterPro" id="IPR016024">
    <property type="entry name" value="ARM-type_fold"/>
</dbReference>
<dbReference type="InterPro" id="IPR001494">
    <property type="entry name" value="Importin-beta_N"/>
</dbReference>
<dbReference type="InterPro" id="IPR005043">
    <property type="entry name" value="XPO2_C"/>
</dbReference>
<dbReference type="InterPro" id="IPR013713">
    <property type="entry name" value="XPO2_central"/>
</dbReference>
<dbReference type="PANTHER" id="PTHR10997:SF8">
    <property type="entry name" value="EXPORTIN-2"/>
    <property type="match status" value="1"/>
</dbReference>
<dbReference type="PANTHER" id="PTHR10997">
    <property type="entry name" value="IMPORTIN-7, 8, 11"/>
    <property type="match status" value="1"/>
</dbReference>
<dbReference type="Pfam" id="PF03378">
    <property type="entry name" value="CAS_CSE1"/>
    <property type="match status" value="1"/>
</dbReference>
<dbReference type="Pfam" id="PF08506">
    <property type="entry name" value="Cse1"/>
    <property type="match status" value="1"/>
</dbReference>
<dbReference type="Pfam" id="PF03810">
    <property type="entry name" value="IBN_N"/>
    <property type="match status" value="1"/>
</dbReference>
<dbReference type="SMART" id="SM00913">
    <property type="entry name" value="IBN_N"/>
    <property type="match status" value="1"/>
</dbReference>
<dbReference type="SUPFAM" id="SSF48371">
    <property type="entry name" value="ARM repeat"/>
    <property type="match status" value="1"/>
</dbReference>
<dbReference type="PROSITE" id="PS50166">
    <property type="entry name" value="IMPORTIN_B_NT"/>
    <property type="match status" value="1"/>
</dbReference>
<name>XPO2_DICDI</name>
<evidence type="ECO:0000250" key="1"/>
<evidence type="ECO:0000255" key="2">
    <source>
        <dbReference type="PROSITE-ProRule" id="PRU00115"/>
    </source>
</evidence>
<evidence type="ECO:0000305" key="3"/>
<comment type="function">
    <text evidence="1">Export receptor for importin alpha. Mediates importin-alpha re-export from the nucleus to the cytoplasm after import substrates have been released into the nucleoplasm (By similarity).</text>
</comment>
<comment type="subcellular location">
    <subcellularLocation>
        <location evidence="1">Cytoplasm</location>
    </subcellularLocation>
    <subcellularLocation>
        <location evidence="1">Nucleus</location>
    </subcellularLocation>
</comment>
<comment type="similarity">
    <text evidence="3">Belongs to the XPO2/CSE1 family.</text>
</comment>
<reference key="1">
    <citation type="journal article" date="2005" name="Nature">
        <title>The genome of the social amoeba Dictyostelium discoideum.</title>
        <authorList>
            <person name="Eichinger L."/>
            <person name="Pachebat J.A."/>
            <person name="Gloeckner G."/>
            <person name="Rajandream M.A."/>
            <person name="Sucgang R."/>
            <person name="Berriman M."/>
            <person name="Song J."/>
            <person name="Olsen R."/>
            <person name="Szafranski K."/>
            <person name="Xu Q."/>
            <person name="Tunggal B."/>
            <person name="Kummerfeld S."/>
            <person name="Madera M."/>
            <person name="Konfortov B.A."/>
            <person name="Rivero F."/>
            <person name="Bankier A.T."/>
            <person name="Lehmann R."/>
            <person name="Hamlin N."/>
            <person name="Davies R."/>
            <person name="Gaudet P."/>
            <person name="Fey P."/>
            <person name="Pilcher K."/>
            <person name="Chen G."/>
            <person name="Saunders D."/>
            <person name="Sodergren E.J."/>
            <person name="Davis P."/>
            <person name="Kerhornou A."/>
            <person name="Nie X."/>
            <person name="Hall N."/>
            <person name="Anjard C."/>
            <person name="Hemphill L."/>
            <person name="Bason N."/>
            <person name="Farbrother P."/>
            <person name="Desany B."/>
            <person name="Just E."/>
            <person name="Morio T."/>
            <person name="Rost R."/>
            <person name="Churcher C.M."/>
            <person name="Cooper J."/>
            <person name="Haydock S."/>
            <person name="van Driessche N."/>
            <person name="Cronin A."/>
            <person name="Goodhead I."/>
            <person name="Muzny D.M."/>
            <person name="Mourier T."/>
            <person name="Pain A."/>
            <person name="Lu M."/>
            <person name="Harper D."/>
            <person name="Lindsay R."/>
            <person name="Hauser H."/>
            <person name="James K.D."/>
            <person name="Quiles M."/>
            <person name="Madan Babu M."/>
            <person name="Saito T."/>
            <person name="Buchrieser C."/>
            <person name="Wardroper A."/>
            <person name="Felder M."/>
            <person name="Thangavelu M."/>
            <person name="Johnson D."/>
            <person name="Knights A."/>
            <person name="Loulseged H."/>
            <person name="Mungall K.L."/>
            <person name="Oliver K."/>
            <person name="Price C."/>
            <person name="Quail M.A."/>
            <person name="Urushihara H."/>
            <person name="Hernandez J."/>
            <person name="Rabbinowitsch E."/>
            <person name="Steffen D."/>
            <person name="Sanders M."/>
            <person name="Ma J."/>
            <person name="Kohara Y."/>
            <person name="Sharp S."/>
            <person name="Simmonds M.N."/>
            <person name="Spiegler S."/>
            <person name="Tivey A."/>
            <person name="Sugano S."/>
            <person name="White B."/>
            <person name="Walker D."/>
            <person name="Woodward J.R."/>
            <person name="Winckler T."/>
            <person name="Tanaka Y."/>
            <person name="Shaulsky G."/>
            <person name="Schleicher M."/>
            <person name="Weinstock G.M."/>
            <person name="Rosenthal A."/>
            <person name="Cox E.C."/>
            <person name="Chisholm R.L."/>
            <person name="Gibbs R.A."/>
            <person name="Loomis W.F."/>
            <person name="Platzer M."/>
            <person name="Kay R.R."/>
            <person name="Williams J.G."/>
            <person name="Dear P.H."/>
            <person name="Noegel A.A."/>
            <person name="Barrell B.G."/>
            <person name="Kuspa A."/>
        </authorList>
    </citation>
    <scope>NUCLEOTIDE SEQUENCE [LARGE SCALE GENOMIC DNA]</scope>
    <source>
        <strain>AX4</strain>
    </source>
</reference>